<dbReference type="EC" id="2.1.1.172" evidence="1"/>
<dbReference type="EMBL" id="CP000826">
    <property type="protein sequence ID" value="ABV39755.1"/>
    <property type="molecule type" value="Genomic_DNA"/>
</dbReference>
<dbReference type="SMR" id="A8G9G5"/>
<dbReference type="STRING" id="399741.Spro_0649"/>
<dbReference type="KEGG" id="spe:Spro_0649"/>
<dbReference type="eggNOG" id="COG2813">
    <property type="taxonomic scope" value="Bacteria"/>
</dbReference>
<dbReference type="HOGENOM" id="CLU_049581_0_1_6"/>
<dbReference type="OrthoDB" id="9816072at2"/>
<dbReference type="GO" id="GO:0005737">
    <property type="term" value="C:cytoplasm"/>
    <property type="evidence" value="ECO:0007669"/>
    <property type="project" value="UniProtKB-SubCell"/>
</dbReference>
<dbReference type="GO" id="GO:0052914">
    <property type="term" value="F:16S rRNA (guanine(1207)-N(2))-methyltransferase activity"/>
    <property type="evidence" value="ECO:0007669"/>
    <property type="project" value="UniProtKB-EC"/>
</dbReference>
<dbReference type="GO" id="GO:0003676">
    <property type="term" value="F:nucleic acid binding"/>
    <property type="evidence" value="ECO:0007669"/>
    <property type="project" value="InterPro"/>
</dbReference>
<dbReference type="CDD" id="cd02440">
    <property type="entry name" value="AdoMet_MTases"/>
    <property type="match status" value="1"/>
</dbReference>
<dbReference type="Gene3D" id="3.40.50.150">
    <property type="entry name" value="Vaccinia Virus protein VP39"/>
    <property type="match status" value="2"/>
</dbReference>
<dbReference type="HAMAP" id="MF_01862">
    <property type="entry name" value="16SrRNA_methyltr_C"/>
    <property type="match status" value="1"/>
</dbReference>
<dbReference type="InterPro" id="IPR002052">
    <property type="entry name" value="DNA_methylase_N6_adenine_CS"/>
</dbReference>
<dbReference type="InterPro" id="IPR013675">
    <property type="entry name" value="Mtase_sm_N"/>
</dbReference>
<dbReference type="InterPro" id="IPR023543">
    <property type="entry name" value="rRNA_ssu_MeTfrase_C"/>
</dbReference>
<dbReference type="InterPro" id="IPR046977">
    <property type="entry name" value="RsmC/RlmG"/>
</dbReference>
<dbReference type="InterPro" id="IPR029063">
    <property type="entry name" value="SAM-dependent_MTases_sf"/>
</dbReference>
<dbReference type="InterPro" id="IPR007848">
    <property type="entry name" value="Small_mtfrase_dom"/>
</dbReference>
<dbReference type="NCBIfam" id="NF007023">
    <property type="entry name" value="PRK09489.1"/>
    <property type="match status" value="1"/>
</dbReference>
<dbReference type="PANTHER" id="PTHR47816">
    <property type="entry name" value="RIBOSOMAL RNA SMALL SUBUNIT METHYLTRANSFERASE C"/>
    <property type="match status" value="1"/>
</dbReference>
<dbReference type="PANTHER" id="PTHR47816:SF4">
    <property type="entry name" value="RIBOSOMAL RNA SMALL SUBUNIT METHYLTRANSFERASE C"/>
    <property type="match status" value="1"/>
</dbReference>
<dbReference type="Pfam" id="PF05175">
    <property type="entry name" value="MTS"/>
    <property type="match status" value="1"/>
</dbReference>
<dbReference type="Pfam" id="PF08468">
    <property type="entry name" value="MTS_N"/>
    <property type="match status" value="1"/>
</dbReference>
<dbReference type="SUPFAM" id="SSF53335">
    <property type="entry name" value="S-adenosyl-L-methionine-dependent methyltransferases"/>
    <property type="match status" value="1"/>
</dbReference>
<sequence>MSALTPASEVMLRHSDEFIERRVLFAGDLQDALPAQFEAADVRVHTQQYHHWQLLNRAMGDNVQYGLTVDAAFVAECDTLIYYWPKSKQEAQFQLCNILALLPVGTDVFVVGENRSGVRSADQMVEDYATLVKIDSARRCGLYHGRLDTQTEFNLEDWWESYQLHDLEVKTLPGVFSRDGLDVGSSLLLSTLDKHMKGKVLDVGCGAGVMASVLSKLSPKMKLTLSDVNAAAIESSRATLAANGIEGEVIVSNVYSDITGRFDLIISNPPFHDGLQTSLTAAETLIRGALKHLGVGGKLRIVANAFLPYPDILDATFGSHEVLAQNGRFKVYQATVARAPRDAKKKK</sequence>
<accession>A8G9G5</accession>
<gene>
    <name evidence="1" type="primary">rsmC</name>
    <name type="ordered locus">Spro_0649</name>
</gene>
<comment type="function">
    <text evidence="1">Specifically methylates the guanine in position 1207 of 16S rRNA in the 30S particle.</text>
</comment>
<comment type="catalytic activity">
    <reaction evidence="1">
        <text>guanosine(1207) in 16S rRNA + S-adenosyl-L-methionine = N(2)-methylguanosine(1207) in 16S rRNA + S-adenosyl-L-homocysteine + H(+)</text>
        <dbReference type="Rhea" id="RHEA:42736"/>
        <dbReference type="Rhea" id="RHEA-COMP:10213"/>
        <dbReference type="Rhea" id="RHEA-COMP:10214"/>
        <dbReference type="ChEBI" id="CHEBI:15378"/>
        <dbReference type="ChEBI" id="CHEBI:57856"/>
        <dbReference type="ChEBI" id="CHEBI:59789"/>
        <dbReference type="ChEBI" id="CHEBI:74269"/>
        <dbReference type="ChEBI" id="CHEBI:74481"/>
        <dbReference type="EC" id="2.1.1.172"/>
    </reaction>
</comment>
<comment type="subunit">
    <text evidence="1">Monomer.</text>
</comment>
<comment type="subcellular location">
    <subcellularLocation>
        <location evidence="1">Cytoplasm</location>
    </subcellularLocation>
</comment>
<comment type="similarity">
    <text evidence="1">Belongs to the methyltransferase superfamily. RsmC family.</text>
</comment>
<keyword id="KW-0963">Cytoplasm</keyword>
<keyword id="KW-0489">Methyltransferase</keyword>
<keyword id="KW-0698">rRNA processing</keyword>
<keyword id="KW-0949">S-adenosyl-L-methionine</keyword>
<keyword id="KW-0808">Transferase</keyword>
<protein>
    <recommendedName>
        <fullName evidence="1">Ribosomal RNA small subunit methyltransferase C</fullName>
        <ecNumber evidence="1">2.1.1.172</ecNumber>
    </recommendedName>
    <alternativeName>
        <fullName evidence="1">16S rRNA m2G1207 methyltransferase</fullName>
    </alternativeName>
    <alternativeName>
        <fullName evidence="1">rRNA (guanine-N(2)-)-methyltransferase RsmC</fullName>
    </alternativeName>
</protein>
<feature type="chain" id="PRO_0000369765" description="Ribosomal RNA small subunit methyltransferase C">
    <location>
        <begin position="1"/>
        <end position="347"/>
    </location>
</feature>
<reference key="1">
    <citation type="submission" date="2007-09" db="EMBL/GenBank/DDBJ databases">
        <title>Complete sequence of chromosome of Serratia proteamaculans 568.</title>
        <authorList>
            <consortium name="US DOE Joint Genome Institute"/>
            <person name="Copeland A."/>
            <person name="Lucas S."/>
            <person name="Lapidus A."/>
            <person name="Barry K."/>
            <person name="Glavina del Rio T."/>
            <person name="Dalin E."/>
            <person name="Tice H."/>
            <person name="Pitluck S."/>
            <person name="Chain P."/>
            <person name="Malfatti S."/>
            <person name="Shin M."/>
            <person name="Vergez L."/>
            <person name="Schmutz J."/>
            <person name="Larimer F."/>
            <person name="Land M."/>
            <person name="Hauser L."/>
            <person name="Kyrpides N."/>
            <person name="Kim E."/>
            <person name="Taghavi S."/>
            <person name="Newman L."/>
            <person name="Vangronsveld J."/>
            <person name="van der Lelie D."/>
            <person name="Richardson P."/>
        </authorList>
    </citation>
    <scope>NUCLEOTIDE SEQUENCE [LARGE SCALE GENOMIC DNA]</scope>
    <source>
        <strain>568</strain>
    </source>
</reference>
<evidence type="ECO:0000255" key="1">
    <source>
        <dbReference type="HAMAP-Rule" id="MF_01862"/>
    </source>
</evidence>
<name>RSMC_SERP5</name>
<proteinExistence type="inferred from homology"/>
<organism>
    <name type="scientific">Serratia proteamaculans (strain 568)</name>
    <dbReference type="NCBI Taxonomy" id="399741"/>
    <lineage>
        <taxon>Bacteria</taxon>
        <taxon>Pseudomonadati</taxon>
        <taxon>Pseudomonadota</taxon>
        <taxon>Gammaproteobacteria</taxon>
        <taxon>Enterobacterales</taxon>
        <taxon>Yersiniaceae</taxon>
        <taxon>Serratia</taxon>
    </lineage>
</organism>